<dbReference type="EC" id="2.1.1.319" evidence="2"/>
<dbReference type="EMBL" id="AE014297">
    <property type="protein sequence ID" value="AAF54471.1"/>
    <property type="molecule type" value="Genomic_DNA"/>
</dbReference>
<dbReference type="EMBL" id="BT004851">
    <property type="protein sequence ID" value="AAO45207.1"/>
    <property type="molecule type" value="mRNA"/>
</dbReference>
<dbReference type="RefSeq" id="NP_001262445.1">
    <property type="nucleotide sequence ID" value="NM_001275516.1"/>
</dbReference>
<dbReference type="RefSeq" id="NP_649963.1">
    <property type="nucleotide sequence ID" value="NM_141706.3"/>
</dbReference>
<dbReference type="SMR" id="Q9VH48"/>
<dbReference type="BioGRID" id="66376">
    <property type="interactions" value="29"/>
</dbReference>
<dbReference type="FunCoup" id="Q9VH48">
    <property type="interactions" value="2408"/>
</dbReference>
<dbReference type="IntAct" id="Q9VH48">
    <property type="interactions" value="25"/>
</dbReference>
<dbReference type="STRING" id="7227.FBpp0305840"/>
<dbReference type="PaxDb" id="7227-FBpp0305840"/>
<dbReference type="DNASU" id="41219"/>
<dbReference type="EnsemblMetazoa" id="FBtr0082150">
    <property type="protein sequence ID" value="FBpp0081628"/>
    <property type="gene ID" value="FBgn0037770"/>
</dbReference>
<dbReference type="EnsemblMetazoa" id="FBtr0333687">
    <property type="protein sequence ID" value="FBpp0305840"/>
    <property type="gene ID" value="FBgn0037770"/>
</dbReference>
<dbReference type="GeneID" id="41219"/>
<dbReference type="KEGG" id="dme:Dmel_CG5358"/>
<dbReference type="AGR" id="FB:FBgn0037770"/>
<dbReference type="CTD" id="420"/>
<dbReference type="FlyBase" id="FBgn0037770">
    <property type="gene designation" value="Art4"/>
</dbReference>
<dbReference type="VEuPathDB" id="VectorBase:FBgn0037770"/>
<dbReference type="eggNOG" id="KOG1500">
    <property type="taxonomic scope" value="Eukaryota"/>
</dbReference>
<dbReference type="GeneTree" id="ENSGT00940000169584"/>
<dbReference type="HOGENOM" id="CLU_017375_0_1_1"/>
<dbReference type="InParanoid" id="Q9VH48"/>
<dbReference type="OMA" id="GIGDGMD"/>
<dbReference type="OrthoDB" id="7848332at2759"/>
<dbReference type="PhylomeDB" id="Q9VH48"/>
<dbReference type="Reactome" id="R-DME-400206">
    <property type="pathway name" value="Regulation of lipid metabolism by PPARalpha"/>
</dbReference>
<dbReference type="Reactome" id="R-DME-9018519">
    <property type="pathway name" value="Estrogen-dependent gene expression"/>
</dbReference>
<dbReference type="Reactome" id="R-DME-9707564">
    <property type="pathway name" value="Cytoprotection by HMOX1"/>
</dbReference>
<dbReference type="SignaLink" id="Q9VH48"/>
<dbReference type="BioGRID-ORCS" id="41219">
    <property type="hits" value="0 hits in 1 CRISPR screen"/>
</dbReference>
<dbReference type="GenomeRNAi" id="41219"/>
<dbReference type="PRO" id="PR:Q9VH48"/>
<dbReference type="Proteomes" id="UP000000803">
    <property type="component" value="Chromosome 3R"/>
</dbReference>
<dbReference type="Bgee" id="FBgn0037770">
    <property type="expression patterns" value="Expressed in dorsal appendage forming follicle cell in ovary and 136 other cell types or tissues"/>
</dbReference>
<dbReference type="ExpressionAtlas" id="Q9VH48">
    <property type="expression patterns" value="baseline and differential"/>
</dbReference>
<dbReference type="GO" id="GO:0005737">
    <property type="term" value="C:cytoplasm"/>
    <property type="evidence" value="ECO:0000314"/>
    <property type="project" value="UniProtKB"/>
</dbReference>
<dbReference type="GO" id="GO:0005829">
    <property type="term" value="C:cytosol"/>
    <property type="evidence" value="ECO:0000314"/>
    <property type="project" value="FlyBase"/>
</dbReference>
<dbReference type="GO" id="GO:0035097">
    <property type="term" value="C:histone methyltransferase complex"/>
    <property type="evidence" value="ECO:0000314"/>
    <property type="project" value="FlyBase"/>
</dbReference>
<dbReference type="GO" id="GO:0005634">
    <property type="term" value="C:nucleus"/>
    <property type="evidence" value="ECO:0000314"/>
    <property type="project" value="UniProtKB"/>
</dbReference>
<dbReference type="GO" id="GO:0008469">
    <property type="term" value="F:histone arginine N-methyltransferase activity"/>
    <property type="evidence" value="ECO:0000250"/>
    <property type="project" value="FlyBase"/>
</dbReference>
<dbReference type="GO" id="GO:0035642">
    <property type="term" value="F:histone H3R17 methyltransferase activity"/>
    <property type="evidence" value="ECO:0000250"/>
    <property type="project" value="UniProtKB"/>
</dbReference>
<dbReference type="GO" id="GO:0070611">
    <property type="term" value="F:histone H3R2 methyltransferase activity"/>
    <property type="evidence" value="ECO:0000250"/>
    <property type="project" value="UniProtKB"/>
</dbReference>
<dbReference type="GO" id="GO:0042054">
    <property type="term" value="F:histone methyltransferase activity"/>
    <property type="evidence" value="ECO:0000314"/>
    <property type="project" value="FlyBase"/>
</dbReference>
<dbReference type="GO" id="GO:0035242">
    <property type="term" value="F:protein-arginine omega-N asymmetric methyltransferase activity"/>
    <property type="evidence" value="ECO:0000314"/>
    <property type="project" value="FlyBase"/>
</dbReference>
<dbReference type="GO" id="GO:0035241">
    <property type="term" value="F:protein-arginine omega-N monomethyltransferase activity"/>
    <property type="evidence" value="ECO:0000314"/>
    <property type="project" value="FlyBase"/>
</dbReference>
<dbReference type="GO" id="GO:0006338">
    <property type="term" value="P:chromatin remodeling"/>
    <property type="evidence" value="ECO:0000318"/>
    <property type="project" value="GO_Central"/>
</dbReference>
<dbReference type="GO" id="GO:0032259">
    <property type="term" value="P:methylation"/>
    <property type="evidence" value="ECO:0007669"/>
    <property type="project" value="UniProtKB-KW"/>
</dbReference>
<dbReference type="GO" id="GO:0120142">
    <property type="term" value="P:positive regulation of ecdysone receptor signaling pathway"/>
    <property type="evidence" value="ECO:0000314"/>
    <property type="project" value="FlyBase"/>
</dbReference>
<dbReference type="GO" id="GO:0045944">
    <property type="term" value="P:positive regulation of transcription by RNA polymerase II"/>
    <property type="evidence" value="ECO:0000314"/>
    <property type="project" value="FlyBase"/>
</dbReference>
<dbReference type="GO" id="GO:0006355">
    <property type="term" value="P:regulation of DNA-templated transcription"/>
    <property type="evidence" value="ECO:0000318"/>
    <property type="project" value="GO_Central"/>
</dbReference>
<dbReference type="CDD" id="cd02440">
    <property type="entry name" value="AdoMet_MTases"/>
    <property type="match status" value="1"/>
</dbReference>
<dbReference type="FunFam" id="2.30.29.30:FF:000449">
    <property type="entry name" value="Histone-arginine methyltransferase CARMER"/>
    <property type="match status" value="1"/>
</dbReference>
<dbReference type="FunFam" id="2.70.160.11:FF:000002">
    <property type="entry name" value="Probable histone-arginine methyltransferase CARM1"/>
    <property type="match status" value="1"/>
</dbReference>
<dbReference type="FunFam" id="3.40.50.150:FF:000031">
    <property type="entry name" value="Putative Histone-arginine methyltransferase CARM1"/>
    <property type="match status" value="1"/>
</dbReference>
<dbReference type="Gene3D" id="2.70.160.11">
    <property type="entry name" value="Hnrnp arginine n-methyltransferase1"/>
    <property type="match status" value="1"/>
</dbReference>
<dbReference type="Gene3D" id="2.30.29.30">
    <property type="entry name" value="Pleckstrin-homology domain (PH domain)/Phosphotyrosine-binding domain (PTB)"/>
    <property type="match status" value="1"/>
</dbReference>
<dbReference type="Gene3D" id="3.40.50.150">
    <property type="entry name" value="Vaccinia Virus protein VP39"/>
    <property type="match status" value="1"/>
</dbReference>
<dbReference type="InterPro" id="IPR025799">
    <property type="entry name" value="Arg_MeTrfase"/>
</dbReference>
<dbReference type="InterPro" id="IPR011993">
    <property type="entry name" value="PH-like_dom_sf"/>
</dbReference>
<dbReference type="InterPro" id="IPR055135">
    <property type="entry name" value="PRMT_dom"/>
</dbReference>
<dbReference type="InterPro" id="IPR029063">
    <property type="entry name" value="SAM-dependent_MTases_sf"/>
</dbReference>
<dbReference type="PANTHER" id="PTHR11006:SF10">
    <property type="entry name" value="HISTONE-ARGININE METHYLTRANSFERASE CARMER-RELATED"/>
    <property type="match status" value="1"/>
</dbReference>
<dbReference type="PANTHER" id="PTHR11006">
    <property type="entry name" value="PROTEIN ARGININE N-METHYLTRANSFERASE"/>
    <property type="match status" value="1"/>
</dbReference>
<dbReference type="Pfam" id="PF06325">
    <property type="entry name" value="PrmA"/>
    <property type="match status" value="1"/>
</dbReference>
<dbReference type="Pfam" id="PF22528">
    <property type="entry name" value="PRMT_C"/>
    <property type="match status" value="1"/>
</dbReference>
<dbReference type="SUPFAM" id="SSF53335">
    <property type="entry name" value="S-adenosyl-L-methionine-dependent methyltransferases"/>
    <property type="match status" value="1"/>
</dbReference>
<dbReference type="PROSITE" id="PS51678">
    <property type="entry name" value="SAM_MT_PRMT"/>
    <property type="match status" value="1"/>
</dbReference>
<name>CARM1_DROME</name>
<comment type="function">
    <text evidence="4 5">Methylates (mono- and asymmetric dimethylation) the guanidino nitrogens of arginyl residues in proteins. May methylate histone H3 at 'Arg-17' and activate transcription via chromatin remodeling. Coordinates ecdysone-mediated expression of cell death genes.</text>
</comment>
<comment type="catalytic activity">
    <reaction evidence="2">
        <text>L-arginyl-[protein] + 2 S-adenosyl-L-methionine = N(omega),N(omega)-dimethyl-L-arginyl-[protein] + 2 S-adenosyl-L-homocysteine + 2 H(+)</text>
        <dbReference type="Rhea" id="RHEA:48096"/>
        <dbReference type="Rhea" id="RHEA-COMP:10532"/>
        <dbReference type="Rhea" id="RHEA-COMP:11991"/>
        <dbReference type="ChEBI" id="CHEBI:15378"/>
        <dbReference type="ChEBI" id="CHEBI:29965"/>
        <dbReference type="ChEBI" id="CHEBI:57856"/>
        <dbReference type="ChEBI" id="CHEBI:59789"/>
        <dbReference type="ChEBI" id="CHEBI:61897"/>
        <dbReference type="EC" id="2.1.1.319"/>
    </reaction>
</comment>
<comment type="subunit">
    <text evidence="1 5">Homodimer (By similarity). Interacts with EcR.</text>
</comment>
<comment type="subcellular location">
    <subcellularLocation>
        <location evidence="6">Cytoplasm</location>
    </subcellularLocation>
    <subcellularLocation>
        <location evidence="4 6">Nucleus</location>
    </subcellularLocation>
</comment>
<comment type="tissue specificity">
    <text evidence="4 6">Present ubiquitously (at protein level). Expressed in the imaginal disks and in larval brains, and to a much lesser degree in the polytene larval tissue such as salivary glands.</text>
</comment>
<comment type="developmental stage">
    <text evidence="5">Expression is high in early embryos, reduced in late embryonic and larval stages, up-regulated at the early prepupal stage and then reduced until the adult stage where it is again up-regulated.</text>
</comment>
<comment type="PTM">
    <text evidence="1">The dimethylated protein is the major form.</text>
</comment>
<comment type="similarity">
    <text evidence="3">Belongs to the class I-like SAM-binding methyltransferase superfamily. Protein arginine N-methyltransferase family.</text>
</comment>
<accession>Q9VH48</accession>
<accession>Q86NL6</accession>
<protein>
    <recommendedName>
        <fullName>Probable histone-arginine methyltransferase CARMER</fullName>
        <ecNumber evidence="2">2.1.1.319</ecNumber>
    </recommendedName>
    <alternativeName>
        <fullName>Coactivator arginine methyltransferase for EcR/Usp</fullName>
    </alternativeName>
    <alternativeName>
        <fullName>Protein arginine N-methyltransferase 4</fullName>
        <shortName>DART4</shortName>
    </alternativeName>
</protein>
<organism>
    <name type="scientific">Drosophila melanogaster</name>
    <name type="common">Fruit fly</name>
    <dbReference type="NCBI Taxonomy" id="7227"/>
    <lineage>
        <taxon>Eukaryota</taxon>
        <taxon>Metazoa</taxon>
        <taxon>Ecdysozoa</taxon>
        <taxon>Arthropoda</taxon>
        <taxon>Hexapoda</taxon>
        <taxon>Insecta</taxon>
        <taxon>Pterygota</taxon>
        <taxon>Neoptera</taxon>
        <taxon>Endopterygota</taxon>
        <taxon>Diptera</taxon>
        <taxon>Brachycera</taxon>
        <taxon>Muscomorpha</taxon>
        <taxon>Ephydroidea</taxon>
        <taxon>Drosophilidae</taxon>
        <taxon>Drosophila</taxon>
        <taxon>Sophophora</taxon>
    </lineage>
</organism>
<sequence>MSSLRPEEARKLATAASVSPLSNCQFCGVVISSIADEQKLEFTNKYKGSCTLLCSYDSQGVVLRVVSDDDRSHVLKEYMIAADTDAAQMGRRSYAVSLDADNLVLRFASEQDQQLFRKVVENVKHLRPKSVFSQRTEESSASQYFQFYGYLSQQQNMMQDYVRTSTYQRAILGNAVDFQDKIVLDVGAGSGILSFFAVQAGAAKVYAIEASNMAQYAQQLVESNNVQHKISVIPGKIEEIELPEKVDVIISEPMGYMLYNERMLETYLHARKWLKPQGKMYPTHGDLHIAPFSDESLYSEQYNKANFWYQSAFHGVDLTTLHKEGMKEYFRQPIVDTFDIRICMAKSVRHVCDFLNDKEDDLHLISIPLEFHILQTGICHGLAFWFDVEFSGSSQNVWLSTSPTAPLTHWYQVRCLLPMPIFIKQGQTLTGRVLLEANRRQSYDVTIDLHIEGTLISSSNTLDLKNPYFRYTGAPVQAPPGTSTQSPSEQYWTQVDTQGSRNSSSMLNGGISVNGIGEGMDITHGLMHPH</sequence>
<reference key="1">
    <citation type="journal article" date="2000" name="Science">
        <title>The genome sequence of Drosophila melanogaster.</title>
        <authorList>
            <person name="Adams M.D."/>
            <person name="Celniker S.E."/>
            <person name="Holt R.A."/>
            <person name="Evans C.A."/>
            <person name="Gocayne J.D."/>
            <person name="Amanatides P.G."/>
            <person name="Scherer S.E."/>
            <person name="Li P.W."/>
            <person name="Hoskins R.A."/>
            <person name="Galle R.F."/>
            <person name="George R.A."/>
            <person name="Lewis S.E."/>
            <person name="Richards S."/>
            <person name="Ashburner M."/>
            <person name="Henderson S.N."/>
            <person name="Sutton G.G."/>
            <person name="Wortman J.R."/>
            <person name="Yandell M.D."/>
            <person name="Zhang Q."/>
            <person name="Chen L.X."/>
            <person name="Brandon R.C."/>
            <person name="Rogers Y.-H.C."/>
            <person name="Blazej R.G."/>
            <person name="Champe M."/>
            <person name="Pfeiffer B.D."/>
            <person name="Wan K.H."/>
            <person name="Doyle C."/>
            <person name="Baxter E.G."/>
            <person name="Helt G."/>
            <person name="Nelson C.R."/>
            <person name="Miklos G.L.G."/>
            <person name="Abril J.F."/>
            <person name="Agbayani A."/>
            <person name="An H.-J."/>
            <person name="Andrews-Pfannkoch C."/>
            <person name="Baldwin D."/>
            <person name="Ballew R.M."/>
            <person name="Basu A."/>
            <person name="Baxendale J."/>
            <person name="Bayraktaroglu L."/>
            <person name="Beasley E.M."/>
            <person name="Beeson K.Y."/>
            <person name="Benos P.V."/>
            <person name="Berman B.P."/>
            <person name="Bhandari D."/>
            <person name="Bolshakov S."/>
            <person name="Borkova D."/>
            <person name="Botchan M.R."/>
            <person name="Bouck J."/>
            <person name="Brokstein P."/>
            <person name="Brottier P."/>
            <person name="Burtis K.C."/>
            <person name="Busam D.A."/>
            <person name="Butler H."/>
            <person name="Cadieu E."/>
            <person name="Center A."/>
            <person name="Chandra I."/>
            <person name="Cherry J.M."/>
            <person name="Cawley S."/>
            <person name="Dahlke C."/>
            <person name="Davenport L.B."/>
            <person name="Davies P."/>
            <person name="de Pablos B."/>
            <person name="Delcher A."/>
            <person name="Deng Z."/>
            <person name="Mays A.D."/>
            <person name="Dew I."/>
            <person name="Dietz S.M."/>
            <person name="Dodson K."/>
            <person name="Doup L.E."/>
            <person name="Downes M."/>
            <person name="Dugan-Rocha S."/>
            <person name="Dunkov B.C."/>
            <person name="Dunn P."/>
            <person name="Durbin K.J."/>
            <person name="Evangelista C.C."/>
            <person name="Ferraz C."/>
            <person name="Ferriera S."/>
            <person name="Fleischmann W."/>
            <person name="Fosler C."/>
            <person name="Gabrielian A.E."/>
            <person name="Garg N.S."/>
            <person name="Gelbart W.M."/>
            <person name="Glasser K."/>
            <person name="Glodek A."/>
            <person name="Gong F."/>
            <person name="Gorrell J.H."/>
            <person name="Gu Z."/>
            <person name="Guan P."/>
            <person name="Harris M."/>
            <person name="Harris N.L."/>
            <person name="Harvey D.A."/>
            <person name="Heiman T.J."/>
            <person name="Hernandez J.R."/>
            <person name="Houck J."/>
            <person name="Hostin D."/>
            <person name="Houston K.A."/>
            <person name="Howland T.J."/>
            <person name="Wei M.-H."/>
            <person name="Ibegwam C."/>
            <person name="Jalali M."/>
            <person name="Kalush F."/>
            <person name="Karpen G.H."/>
            <person name="Ke Z."/>
            <person name="Kennison J.A."/>
            <person name="Ketchum K.A."/>
            <person name="Kimmel B.E."/>
            <person name="Kodira C.D."/>
            <person name="Kraft C.L."/>
            <person name="Kravitz S."/>
            <person name="Kulp D."/>
            <person name="Lai Z."/>
            <person name="Lasko P."/>
            <person name="Lei Y."/>
            <person name="Levitsky A.A."/>
            <person name="Li J.H."/>
            <person name="Li Z."/>
            <person name="Liang Y."/>
            <person name="Lin X."/>
            <person name="Liu X."/>
            <person name="Mattei B."/>
            <person name="McIntosh T.C."/>
            <person name="McLeod M.P."/>
            <person name="McPherson D."/>
            <person name="Merkulov G."/>
            <person name="Milshina N.V."/>
            <person name="Mobarry C."/>
            <person name="Morris J."/>
            <person name="Moshrefi A."/>
            <person name="Mount S.M."/>
            <person name="Moy M."/>
            <person name="Murphy B."/>
            <person name="Murphy L."/>
            <person name="Muzny D.M."/>
            <person name="Nelson D.L."/>
            <person name="Nelson D.R."/>
            <person name="Nelson K.A."/>
            <person name="Nixon K."/>
            <person name="Nusskern D.R."/>
            <person name="Pacleb J.M."/>
            <person name="Palazzolo M."/>
            <person name="Pittman G.S."/>
            <person name="Pan S."/>
            <person name="Pollard J."/>
            <person name="Puri V."/>
            <person name="Reese M.G."/>
            <person name="Reinert K."/>
            <person name="Remington K."/>
            <person name="Saunders R.D.C."/>
            <person name="Scheeler F."/>
            <person name="Shen H."/>
            <person name="Shue B.C."/>
            <person name="Siden-Kiamos I."/>
            <person name="Simpson M."/>
            <person name="Skupski M.P."/>
            <person name="Smith T.J."/>
            <person name="Spier E."/>
            <person name="Spradling A.C."/>
            <person name="Stapleton M."/>
            <person name="Strong R."/>
            <person name="Sun E."/>
            <person name="Svirskas R."/>
            <person name="Tector C."/>
            <person name="Turner R."/>
            <person name="Venter E."/>
            <person name="Wang A.H."/>
            <person name="Wang X."/>
            <person name="Wang Z.-Y."/>
            <person name="Wassarman D.A."/>
            <person name="Weinstock G.M."/>
            <person name="Weissenbach J."/>
            <person name="Williams S.M."/>
            <person name="Woodage T."/>
            <person name="Worley K.C."/>
            <person name="Wu D."/>
            <person name="Yang S."/>
            <person name="Yao Q.A."/>
            <person name="Ye J."/>
            <person name="Yeh R.-F."/>
            <person name="Zaveri J.S."/>
            <person name="Zhan M."/>
            <person name="Zhang G."/>
            <person name="Zhao Q."/>
            <person name="Zheng L."/>
            <person name="Zheng X.H."/>
            <person name="Zhong F.N."/>
            <person name="Zhong W."/>
            <person name="Zhou X."/>
            <person name="Zhu S.C."/>
            <person name="Zhu X."/>
            <person name="Smith H.O."/>
            <person name="Gibbs R.A."/>
            <person name="Myers E.W."/>
            <person name="Rubin G.M."/>
            <person name="Venter J.C."/>
        </authorList>
    </citation>
    <scope>NUCLEOTIDE SEQUENCE [LARGE SCALE GENOMIC DNA]</scope>
    <source>
        <strain>Berkeley</strain>
    </source>
</reference>
<reference key="2">
    <citation type="journal article" date="2002" name="Genome Biol.">
        <title>Annotation of the Drosophila melanogaster euchromatic genome: a systematic review.</title>
        <authorList>
            <person name="Misra S."/>
            <person name="Crosby M.A."/>
            <person name="Mungall C.J."/>
            <person name="Matthews B.B."/>
            <person name="Campbell K.S."/>
            <person name="Hradecky P."/>
            <person name="Huang Y."/>
            <person name="Kaminker J.S."/>
            <person name="Millburn G.H."/>
            <person name="Prochnik S.E."/>
            <person name="Smith C.D."/>
            <person name="Tupy J.L."/>
            <person name="Whitfield E.J."/>
            <person name="Bayraktaroglu L."/>
            <person name="Berman B.P."/>
            <person name="Bettencourt B.R."/>
            <person name="Celniker S.E."/>
            <person name="de Grey A.D.N.J."/>
            <person name="Drysdale R.A."/>
            <person name="Harris N.L."/>
            <person name="Richter J."/>
            <person name="Russo S."/>
            <person name="Schroeder A.J."/>
            <person name="Shu S.Q."/>
            <person name="Stapleton M."/>
            <person name="Yamada C."/>
            <person name="Ashburner M."/>
            <person name="Gelbart W.M."/>
            <person name="Rubin G.M."/>
            <person name="Lewis S.E."/>
        </authorList>
    </citation>
    <scope>GENOME REANNOTATION</scope>
    <source>
        <strain>Berkeley</strain>
    </source>
</reference>
<reference key="3">
    <citation type="journal article" date="2002" name="Genome Biol.">
        <title>A Drosophila full-length cDNA resource.</title>
        <authorList>
            <person name="Stapleton M."/>
            <person name="Carlson J.W."/>
            <person name="Brokstein P."/>
            <person name="Yu C."/>
            <person name="Champe M."/>
            <person name="George R.A."/>
            <person name="Guarin H."/>
            <person name="Kronmiller B."/>
            <person name="Pacleb J.M."/>
            <person name="Park S."/>
            <person name="Wan K.H."/>
            <person name="Rubin G.M."/>
            <person name="Celniker S.E."/>
        </authorList>
    </citation>
    <scope>NUCLEOTIDE SEQUENCE [LARGE SCALE MRNA]</scope>
    <source>
        <strain>Berkeley</strain>
        <tissue>Embryo</tissue>
    </source>
</reference>
<reference key="4">
    <citation type="journal article" date="2004" name="Biochem. J.">
        <title>Characterization of the Drosophila protein arginine methyltransferases DART1 and DART4.</title>
        <authorList>
            <person name="Boulanger M.-C."/>
            <person name="Miranda T.B."/>
            <person name="Clarke S."/>
            <person name="Di Fruscio M."/>
            <person name="Suter B."/>
            <person name="Lasko P."/>
            <person name="Richard S."/>
        </authorList>
    </citation>
    <scope>FUNCTION</scope>
    <scope>TISSUE SPECIFICITY</scope>
    <scope>SUBCELLULAR LOCATION</scope>
</reference>
<reference key="5">
    <citation type="journal article" date="2004" name="J. Biol. Chem.">
        <title>An arginine-histone methyltransferase, CARMER, coordinates ecdysone-mediated apoptosis in Drosophila cells.</title>
        <authorList>
            <person name="Cakouros D."/>
            <person name="Daish T.J."/>
            <person name="Mills K."/>
            <person name="Kumar S."/>
        </authorList>
    </citation>
    <scope>FUNCTION</scope>
    <scope>INTERACTION WITH ECR</scope>
    <scope>DEVELOPMENTAL STAGE</scope>
</reference>
<reference key="6">
    <citation type="journal article" date="2007" name="Differentiation">
        <title>Tissue-dependent subcellular localization of Drosophila arginine methyl-transferase 4 (DART4), a coactivator whose overexpression affects neither viability nor differentiation.</title>
        <authorList>
            <person name="Urwyler O."/>
            <person name="Zhang L."/>
            <person name="Li X."/>
            <person name="Imboden H."/>
            <person name="Suter B."/>
        </authorList>
    </citation>
    <scope>SUBCELLULAR LOCATION</scope>
    <scope>TISSUE SPECIFICITY</scope>
</reference>
<gene>
    <name type="primary">Art4</name>
    <name type="synonym">Carmer</name>
    <name type="ORF">CG5358</name>
</gene>
<keyword id="KW-0156">Chromatin regulator</keyword>
<keyword id="KW-0963">Cytoplasm</keyword>
<keyword id="KW-0488">Methylation</keyword>
<keyword id="KW-0489">Methyltransferase</keyword>
<keyword id="KW-0539">Nucleus</keyword>
<keyword id="KW-1185">Reference proteome</keyword>
<keyword id="KW-0949">S-adenosyl-L-methionine</keyword>
<keyword id="KW-0804">Transcription</keyword>
<keyword id="KW-0805">Transcription regulation</keyword>
<keyword id="KW-0808">Transferase</keyword>
<feature type="chain" id="PRO_0000249253" description="Probable histone-arginine methyltransferase CARMER">
    <location>
        <begin position="1"/>
        <end position="530"/>
    </location>
</feature>
<feature type="domain" description="SAM-dependent MTase PRMT-type" evidence="3">
    <location>
        <begin position="141"/>
        <end position="450"/>
    </location>
</feature>
<feature type="binding site" evidence="1">
    <location>
        <position position="154"/>
    </location>
    <ligand>
        <name>S-adenosyl-L-methionine</name>
        <dbReference type="ChEBI" id="CHEBI:59789"/>
    </ligand>
</feature>
<feature type="binding site" evidence="1">
    <location>
        <position position="163"/>
    </location>
    <ligand>
        <name>S-adenosyl-L-methionine</name>
        <dbReference type="ChEBI" id="CHEBI:59789"/>
    </ligand>
</feature>
<feature type="binding site" evidence="1">
    <location>
        <position position="187"/>
    </location>
    <ligand>
        <name>S-adenosyl-L-methionine</name>
        <dbReference type="ChEBI" id="CHEBI:59789"/>
    </ligand>
</feature>
<feature type="binding site" evidence="1">
    <location>
        <position position="209"/>
    </location>
    <ligand>
        <name>S-adenosyl-L-methionine</name>
        <dbReference type="ChEBI" id="CHEBI:59789"/>
    </ligand>
</feature>
<feature type="binding site" evidence="1">
    <location>
        <position position="238"/>
    </location>
    <ligand>
        <name>S-adenosyl-L-methionine</name>
        <dbReference type="ChEBI" id="CHEBI:59789"/>
    </ligand>
</feature>
<feature type="binding site" evidence="1">
    <location>
        <position position="266"/>
    </location>
    <ligand>
        <name>S-adenosyl-L-methionine</name>
        <dbReference type="ChEBI" id="CHEBI:59789"/>
    </ligand>
</feature>
<feature type="modified residue" description="Asymmetric dimethylarginine; by autocatalysis" evidence="1">
    <location>
        <position position="501"/>
    </location>
</feature>
<feature type="sequence conflict" description="In Ref. 3; AAO45207." evidence="7" ref="3">
    <original>E</original>
    <variation>G</variation>
    <location>
        <position position="121"/>
    </location>
</feature>
<evidence type="ECO:0000250" key="1"/>
<evidence type="ECO:0000250" key="2">
    <source>
        <dbReference type="UniProtKB" id="Q7Q2B7"/>
    </source>
</evidence>
<evidence type="ECO:0000255" key="3">
    <source>
        <dbReference type="PROSITE-ProRule" id="PRU01015"/>
    </source>
</evidence>
<evidence type="ECO:0000269" key="4">
    <source>
    </source>
</evidence>
<evidence type="ECO:0000269" key="5">
    <source>
    </source>
</evidence>
<evidence type="ECO:0000269" key="6">
    <source>
    </source>
</evidence>
<evidence type="ECO:0000305" key="7"/>
<proteinExistence type="evidence at protein level"/>